<accession>B2FQV2</accession>
<proteinExistence type="inferred from homology"/>
<protein>
    <recommendedName>
        <fullName evidence="1">Flagellar L-ring protein</fullName>
    </recommendedName>
    <alternativeName>
        <fullName evidence="1">Basal body L-ring protein</fullName>
    </alternativeName>
</protein>
<organism>
    <name type="scientific">Stenotrophomonas maltophilia (strain K279a)</name>
    <dbReference type="NCBI Taxonomy" id="522373"/>
    <lineage>
        <taxon>Bacteria</taxon>
        <taxon>Pseudomonadati</taxon>
        <taxon>Pseudomonadota</taxon>
        <taxon>Gammaproteobacteria</taxon>
        <taxon>Lysobacterales</taxon>
        <taxon>Lysobacteraceae</taxon>
        <taxon>Stenotrophomonas</taxon>
        <taxon>Stenotrophomonas maltophilia group</taxon>
    </lineage>
</organism>
<comment type="function">
    <text evidence="1">Assembles around the rod to form the L-ring and probably protects the motor/basal body from shearing forces during rotation.</text>
</comment>
<comment type="subunit">
    <text evidence="1">The basal body constitutes a major portion of the flagellar organelle and consists of four rings (L,P,S, and M) mounted on a central rod.</text>
</comment>
<comment type="subcellular location">
    <subcellularLocation>
        <location evidence="1">Cell outer membrane</location>
        <topology evidence="1">Lipid-anchor</topology>
    </subcellularLocation>
    <subcellularLocation>
        <location evidence="1">Bacterial flagellum basal body</location>
    </subcellularLocation>
</comment>
<comment type="similarity">
    <text evidence="1">Belongs to the FlgH family.</text>
</comment>
<gene>
    <name evidence="1" type="primary">flgH</name>
    <name type="ordered locus">Smlt2311</name>
</gene>
<name>FLGH_STRMK</name>
<dbReference type="EMBL" id="AM743169">
    <property type="protein sequence ID" value="CAQ45805.1"/>
    <property type="molecule type" value="Genomic_DNA"/>
</dbReference>
<dbReference type="RefSeq" id="WP_012480124.1">
    <property type="nucleotide sequence ID" value="NC_010943.1"/>
</dbReference>
<dbReference type="SMR" id="B2FQV2"/>
<dbReference type="EnsemblBacteria" id="CAQ45805">
    <property type="protein sequence ID" value="CAQ45805"/>
    <property type="gene ID" value="Smlt2311"/>
</dbReference>
<dbReference type="KEGG" id="sml:Smlt2311"/>
<dbReference type="PATRIC" id="fig|522373.3.peg.2205"/>
<dbReference type="eggNOG" id="COG2063">
    <property type="taxonomic scope" value="Bacteria"/>
</dbReference>
<dbReference type="HOGENOM" id="CLU_069313_0_1_6"/>
<dbReference type="Proteomes" id="UP000008840">
    <property type="component" value="Chromosome"/>
</dbReference>
<dbReference type="GO" id="GO:0009427">
    <property type="term" value="C:bacterial-type flagellum basal body, distal rod, L ring"/>
    <property type="evidence" value="ECO:0007669"/>
    <property type="project" value="InterPro"/>
</dbReference>
<dbReference type="GO" id="GO:0009279">
    <property type="term" value="C:cell outer membrane"/>
    <property type="evidence" value="ECO:0007669"/>
    <property type="project" value="UniProtKB-SubCell"/>
</dbReference>
<dbReference type="GO" id="GO:0003774">
    <property type="term" value="F:cytoskeletal motor activity"/>
    <property type="evidence" value="ECO:0007669"/>
    <property type="project" value="InterPro"/>
</dbReference>
<dbReference type="GO" id="GO:0071973">
    <property type="term" value="P:bacterial-type flagellum-dependent cell motility"/>
    <property type="evidence" value="ECO:0007669"/>
    <property type="project" value="InterPro"/>
</dbReference>
<dbReference type="HAMAP" id="MF_00415">
    <property type="entry name" value="FlgH"/>
    <property type="match status" value="1"/>
</dbReference>
<dbReference type="InterPro" id="IPR000527">
    <property type="entry name" value="Flag_Lring"/>
</dbReference>
<dbReference type="NCBIfam" id="NF001304">
    <property type="entry name" value="PRK00249.1-4"/>
    <property type="match status" value="1"/>
</dbReference>
<dbReference type="PANTHER" id="PTHR34933">
    <property type="entry name" value="FLAGELLAR L-RING PROTEIN"/>
    <property type="match status" value="1"/>
</dbReference>
<dbReference type="PANTHER" id="PTHR34933:SF1">
    <property type="entry name" value="FLAGELLAR L-RING PROTEIN"/>
    <property type="match status" value="1"/>
</dbReference>
<dbReference type="Pfam" id="PF02107">
    <property type="entry name" value="FlgH"/>
    <property type="match status" value="1"/>
</dbReference>
<dbReference type="PRINTS" id="PR01008">
    <property type="entry name" value="FLGLRINGFLGH"/>
</dbReference>
<sequence length="230" mass="23955">MSPISNFARIALACTVAALLGGCVIAGDVRPYPAMAPIQPIMPPQAEPTAGAIYAAGPTLQLYSDRRARDVGDLLTITLLENTTAQTSANTATNKESNLSLGTPSILGAPVTLGGKDILSATAKGARDFTGKGNSAQSNRLQGSVTVTVIQRLPNGNLVVQGQKNLRLNQGDELVQVQGIVRPGDISQDNTIPSSRVAEARIVYGGRGPVAQSNAMGWLSRFFNSGLTPF</sequence>
<reference key="1">
    <citation type="journal article" date="2008" name="Genome Biol.">
        <title>The complete genome, comparative and functional analysis of Stenotrophomonas maltophilia reveals an organism heavily shielded by drug resistance determinants.</title>
        <authorList>
            <person name="Crossman L.C."/>
            <person name="Gould V.C."/>
            <person name="Dow J.M."/>
            <person name="Vernikos G.S."/>
            <person name="Okazaki A."/>
            <person name="Sebaihia M."/>
            <person name="Saunders D."/>
            <person name="Arrowsmith C."/>
            <person name="Carver T."/>
            <person name="Peters N."/>
            <person name="Adlem E."/>
            <person name="Kerhornou A."/>
            <person name="Lord A."/>
            <person name="Murphy L."/>
            <person name="Seeger K."/>
            <person name="Squares R."/>
            <person name="Rutter S."/>
            <person name="Quail M.A."/>
            <person name="Rajandream M.A."/>
            <person name="Harris D."/>
            <person name="Churcher C."/>
            <person name="Bentley S.D."/>
            <person name="Parkhill J."/>
            <person name="Thomson N.R."/>
            <person name="Avison M.B."/>
        </authorList>
    </citation>
    <scope>NUCLEOTIDE SEQUENCE [LARGE SCALE GENOMIC DNA]</scope>
    <source>
        <strain>K279a</strain>
    </source>
</reference>
<keyword id="KW-0975">Bacterial flagellum</keyword>
<keyword id="KW-0998">Cell outer membrane</keyword>
<keyword id="KW-0449">Lipoprotein</keyword>
<keyword id="KW-0472">Membrane</keyword>
<keyword id="KW-0564">Palmitate</keyword>
<keyword id="KW-1185">Reference proteome</keyword>
<keyword id="KW-0732">Signal</keyword>
<feature type="signal peptide" evidence="1">
    <location>
        <begin position="1"/>
        <end position="22"/>
    </location>
</feature>
<feature type="chain" id="PRO_1000123961" description="Flagellar L-ring protein">
    <location>
        <begin position="23"/>
        <end position="230"/>
    </location>
</feature>
<feature type="lipid moiety-binding region" description="N-palmitoyl cysteine" evidence="1">
    <location>
        <position position="23"/>
    </location>
</feature>
<feature type="lipid moiety-binding region" description="S-diacylglycerol cysteine" evidence="1">
    <location>
        <position position="23"/>
    </location>
</feature>
<evidence type="ECO:0000255" key="1">
    <source>
        <dbReference type="HAMAP-Rule" id="MF_00415"/>
    </source>
</evidence>